<evidence type="ECO:0000255" key="1">
    <source>
        <dbReference type="HAMAP-Rule" id="MF_01101"/>
    </source>
</evidence>
<proteinExistence type="inferred from homology"/>
<comment type="subcellular location">
    <subcellularLocation>
        <location evidence="1">Cell inner membrane</location>
        <topology evidence="1">Multi-pass membrane protein</topology>
    </subcellularLocation>
</comment>
<comment type="similarity">
    <text evidence="1">Belongs to the UPF0208 family.</text>
</comment>
<gene>
    <name evidence="1" type="primary">yfbV</name>
    <name type="ordered locus">SbBS512_E2671</name>
</gene>
<keyword id="KW-0997">Cell inner membrane</keyword>
<keyword id="KW-1003">Cell membrane</keyword>
<keyword id="KW-0472">Membrane</keyword>
<keyword id="KW-1185">Reference proteome</keyword>
<keyword id="KW-0812">Transmembrane</keyword>
<keyword id="KW-1133">Transmembrane helix</keyword>
<accession>B2TW76</accession>
<feature type="chain" id="PRO_1000137003" description="UPF0208 membrane protein YfbV">
    <location>
        <begin position="1"/>
        <end position="151"/>
    </location>
</feature>
<feature type="transmembrane region" description="Helical" evidence="1">
    <location>
        <begin position="46"/>
        <end position="65"/>
    </location>
</feature>
<feature type="transmembrane region" description="Helical" evidence="1">
    <location>
        <begin position="69"/>
        <end position="91"/>
    </location>
</feature>
<protein>
    <recommendedName>
        <fullName evidence="1">UPF0208 membrane protein YfbV</fullName>
    </recommendedName>
</protein>
<sequence length="151" mass="17213">MSTPDNRSVNFFSLFRRGQHYSKTWPLEKRLAPVFVENRVIKMTRYAIRFMPPIAVFTLCWQIALGGQLGPAVATALFALSLPMQGLWWLGKRSVTPLPPAILNWFYEVRGKLQESGQVLAPVEGKPDYQALADTLKRAFKQLDKTFLDDL</sequence>
<organism>
    <name type="scientific">Shigella boydii serotype 18 (strain CDC 3083-94 / BS512)</name>
    <dbReference type="NCBI Taxonomy" id="344609"/>
    <lineage>
        <taxon>Bacteria</taxon>
        <taxon>Pseudomonadati</taxon>
        <taxon>Pseudomonadota</taxon>
        <taxon>Gammaproteobacteria</taxon>
        <taxon>Enterobacterales</taxon>
        <taxon>Enterobacteriaceae</taxon>
        <taxon>Shigella</taxon>
    </lineage>
</organism>
<dbReference type="EMBL" id="CP001063">
    <property type="protein sequence ID" value="ACD08284.1"/>
    <property type="molecule type" value="Genomic_DNA"/>
</dbReference>
<dbReference type="RefSeq" id="WP_000106627.1">
    <property type="nucleotide sequence ID" value="NC_010658.1"/>
</dbReference>
<dbReference type="STRING" id="344609.SbBS512_E2671"/>
<dbReference type="GeneID" id="93774879"/>
<dbReference type="KEGG" id="sbc:SbBS512_E2671"/>
<dbReference type="HOGENOM" id="CLU_128746_0_0_6"/>
<dbReference type="Proteomes" id="UP000001030">
    <property type="component" value="Chromosome"/>
</dbReference>
<dbReference type="GO" id="GO:0005886">
    <property type="term" value="C:plasma membrane"/>
    <property type="evidence" value="ECO:0007669"/>
    <property type="project" value="UniProtKB-SubCell"/>
</dbReference>
<dbReference type="HAMAP" id="MF_01101">
    <property type="entry name" value="UPF0208"/>
    <property type="match status" value="1"/>
</dbReference>
<dbReference type="InterPro" id="IPR007334">
    <property type="entry name" value="UPF0208"/>
</dbReference>
<dbReference type="NCBIfam" id="NF002493">
    <property type="entry name" value="PRK01816.1"/>
    <property type="match status" value="1"/>
</dbReference>
<dbReference type="Pfam" id="PF04217">
    <property type="entry name" value="DUF412"/>
    <property type="match status" value="1"/>
</dbReference>
<name>YFBV_SHIB3</name>
<reference key="1">
    <citation type="submission" date="2008-05" db="EMBL/GenBank/DDBJ databases">
        <title>Complete sequence of Shigella boydii serotype 18 strain BS512.</title>
        <authorList>
            <person name="Rasko D.A."/>
            <person name="Rosovitz M."/>
            <person name="Maurelli A.T."/>
            <person name="Myers G."/>
            <person name="Seshadri R."/>
            <person name="Cer R."/>
            <person name="Jiang L."/>
            <person name="Ravel J."/>
            <person name="Sebastian Y."/>
        </authorList>
    </citation>
    <scope>NUCLEOTIDE SEQUENCE [LARGE SCALE GENOMIC DNA]</scope>
    <source>
        <strain>CDC 3083-94 / BS512</strain>
    </source>
</reference>